<comment type="function">
    <text evidence="1">Involved in protein export. Acts as a chaperone by maintaining the newly synthesized protein in an open conformation. Functions as a peptidyl-prolyl cis-trans isomerase.</text>
</comment>
<comment type="catalytic activity">
    <reaction evidence="1">
        <text>[protein]-peptidylproline (omega=180) = [protein]-peptidylproline (omega=0)</text>
        <dbReference type="Rhea" id="RHEA:16237"/>
        <dbReference type="Rhea" id="RHEA-COMP:10747"/>
        <dbReference type="Rhea" id="RHEA-COMP:10748"/>
        <dbReference type="ChEBI" id="CHEBI:83833"/>
        <dbReference type="ChEBI" id="CHEBI:83834"/>
        <dbReference type="EC" id="5.2.1.8"/>
    </reaction>
</comment>
<comment type="subcellular location">
    <subcellularLocation>
        <location>Cytoplasm</location>
    </subcellularLocation>
    <text evidence="1">About half TF is bound to the ribosome near the polypeptide exit tunnel while the other half is free in the cytoplasm.</text>
</comment>
<comment type="domain">
    <text evidence="1">Consists of 3 domains; the N-terminus binds the ribosome, the middle domain has PPIase activity, while the C-terminus has intrinsic chaperone activity on its own.</text>
</comment>
<comment type="similarity">
    <text evidence="1">Belongs to the FKBP-type PPIase family. Tig subfamily.</text>
</comment>
<gene>
    <name evidence="1" type="primary">tig</name>
    <name type="ordered locus">Smal_0835</name>
</gene>
<proteinExistence type="inferred from homology"/>
<feature type="chain" id="PRO_1000115585" description="Trigger factor">
    <location>
        <begin position="1"/>
        <end position="431"/>
    </location>
</feature>
<feature type="domain" description="PPIase FKBP-type" evidence="1">
    <location>
        <begin position="158"/>
        <end position="243"/>
    </location>
</feature>
<keyword id="KW-0131">Cell cycle</keyword>
<keyword id="KW-0132">Cell division</keyword>
<keyword id="KW-0143">Chaperone</keyword>
<keyword id="KW-0963">Cytoplasm</keyword>
<keyword id="KW-0413">Isomerase</keyword>
<keyword id="KW-0697">Rotamase</keyword>
<organism>
    <name type="scientific">Stenotrophomonas maltophilia (strain R551-3)</name>
    <dbReference type="NCBI Taxonomy" id="391008"/>
    <lineage>
        <taxon>Bacteria</taxon>
        <taxon>Pseudomonadati</taxon>
        <taxon>Pseudomonadota</taxon>
        <taxon>Gammaproteobacteria</taxon>
        <taxon>Lysobacterales</taxon>
        <taxon>Lysobacteraceae</taxon>
        <taxon>Stenotrophomonas</taxon>
        <taxon>Stenotrophomonas maltophilia group</taxon>
    </lineage>
</organism>
<reference key="1">
    <citation type="submission" date="2008-06" db="EMBL/GenBank/DDBJ databases">
        <title>Complete sequence of Stenotrophomonas maltophilia R551-3.</title>
        <authorList>
            <consortium name="US DOE Joint Genome Institute"/>
            <person name="Lucas S."/>
            <person name="Copeland A."/>
            <person name="Lapidus A."/>
            <person name="Glavina del Rio T."/>
            <person name="Dalin E."/>
            <person name="Tice H."/>
            <person name="Pitluck S."/>
            <person name="Chain P."/>
            <person name="Malfatti S."/>
            <person name="Shin M."/>
            <person name="Vergez L."/>
            <person name="Lang D."/>
            <person name="Schmutz J."/>
            <person name="Larimer F."/>
            <person name="Land M."/>
            <person name="Hauser L."/>
            <person name="Kyrpides N."/>
            <person name="Mikhailova N."/>
            <person name="Taghavi S."/>
            <person name="Monchy S."/>
            <person name="Newman L."/>
            <person name="Vangronsveld J."/>
            <person name="van der Lelie D."/>
            <person name="Richardson P."/>
        </authorList>
    </citation>
    <scope>NUCLEOTIDE SEQUENCE [LARGE SCALE GENOMIC DNA]</scope>
    <source>
        <strain>R551-3</strain>
    </source>
</reference>
<evidence type="ECO:0000255" key="1">
    <source>
        <dbReference type="HAMAP-Rule" id="MF_00303"/>
    </source>
</evidence>
<dbReference type="EC" id="5.2.1.8" evidence="1"/>
<dbReference type="EMBL" id="CP001111">
    <property type="protein sequence ID" value="ACF50540.1"/>
    <property type="molecule type" value="Genomic_DNA"/>
</dbReference>
<dbReference type="RefSeq" id="WP_012510193.1">
    <property type="nucleotide sequence ID" value="NC_011071.1"/>
</dbReference>
<dbReference type="SMR" id="B4SLN0"/>
<dbReference type="STRING" id="391008.Smal_0835"/>
<dbReference type="KEGG" id="smt:Smal_0835"/>
<dbReference type="eggNOG" id="COG0544">
    <property type="taxonomic scope" value="Bacteria"/>
</dbReference>
<dbReference type="HOGENOM" id="CLU_033058_2_0_6"/>
<dbReference type="OrthoDB" id="9767721at2"/>
<dbReference type="Proteomes" id="UP000001867">
    <property type="component" value="Chromosome"/>
</dbReference>
<dbReference type="GO" id="GO:0005737">
    <property type="term" value="C:cytoplasm"/>
    <property type="evidence" value="ECO:0007669"/>
    <property type="project" value="UniProtKB-SubCell"/>
</dbReference>
<dbReference type="GO" id="GO:0003755">
    <property type="term" value="F:peptidyl-prolyl cis-trans isomerase activity"/>
    <property type="evidence" value="ECO:0007669"/>
    <property type="project" value="UniProtKB-UniRule"/>
</dbReference>
<dbReference type="GO" id="GO:0044183">
    <property type="term" value="F:protein folding chaperone"/>
    <property type="evidence" value="ECO:0007669"/>
    <property type="project" value="TreeGrafter"/>
</dbReference>
<dbReference type="GO" id="GO:0043022">
    <property type="term" value="F:ribosome binding"/>
    <property type="evidence" value="ECO:0007669"/>
    <property type="project" value="TreeGrafter"/>
</dbReference>
<dbReference type="GO" id="GO:0051083">
    <property type="term" value="P:'de novo' cotranslational protein folding"/>
    <property type="evidence" value="ECO:0007669"/>
    <property type="project" value="TreeGrafter"/>
</dbReference>
<dbReference type="GO" id="GO:0051301">
    <property type="term" value="P:cell division"/>
    <property type="evidence" value="ECO:0007669"/>
    <property type="project" value="UniProtKB-KW"/>
</dbReference>
<dbReference type="GO" id="GO:0061077">
    <property type="term" value="P:chaperone-mediated protein folding"/>
    <property type="evidence" value="ECO:0007669"/>
    <property type="project" value="TreeGrafter"/>
</dbReference>
<dbReference type="GO" id="GO:0015031">
    <property type="term" value="P:protein transport"/>
    <property type="evidence" value="ECO:0007669"/>
    <property type="project" value="UniProtKB-UniRule"/>
</dbReference>
<dbReference type="GO" id="GO:0043335">
    <property type="term" value="P:protein unfolding"/>
    <property type="evidence" value="ECO:0007669"/>
    <property type="project" value="TreeGrafter"/>
</dbReference>
<dbReference type="Gene3D" id="3.10.50.40">
    <property type="match status" value="1"/>
</dbReference>
<dbReference type="Gene3D" id="3.30.70.1050">
    <property type="entry name" value="Trigger factor ribosome-binding domain"/>
    <property type="match status" value="1"/>
</dbReference>
<dbReference type="Gene3D" id="1.10.3120.10">
    <property type="entry name" value="Trigger factor, C-terminal domain"/>
    <property type="match status" value="1"/>
</dbReference>
<dbReference type="HAMAP" id="MF_00303">
    <property type="entry name" value="Trigger_factor_Tig"/>
    <property type="match status" value="1"/>
</dbReference>
<dbReference type="InterPro" id="IPR046357">
    <property type="entry name" value="PPIase_dom_sf"/>
</dbReference>
<dbReference type="InterPro" id="IPR005215">
    <property type="entry name" value="Trig_fac"/>
</dbReference>
<dbReference type="InterPro" id="IPR008880">
    <property type="entry name" value="Trigger_fac_C"/>
</dbReference>
<dbReference type="InterPro" id="IPR037041">
    <property type="entry name" value="Trigger_fac_C_sf"/>
</dbReference>
<dbReference type="InterPro" id="IPR008881">
    <property type="entry name" value="Trigger_fac_ribosome-bd_bac"/>
</dbReference>
<dbReference type="InterPro" id="IPR036611">
    <property type="entry name" value="Trigger_fac_ribosome-bd_sf"/>
</dbReference>
<dbReference type="InterPro" id="IPR027304">
    <property type="entry name" value="Trigger_fact/SurA_dom_sf"/>
</dbReference>
<dbReference type="NCBIfam" id="TIGR00115">
    <property type="entry name" value="tig"/>
    <property type="match status" value="1"/>
</dbReference>
<dbReference type="PANTHER" id="PTHR30560">
    <property type="entry name" value="TRIGGER FACTOR CHAPERONE AND PEPTIDYL-PROLYL CIS/TRANS ISOMERASE"/>
    <property type="match status" value="1"/>
</dbReference>
<dbReference type="PANTHER" id="PTHR30560:SF3">
    <property type="entry name" value="TRIGGER FACTOR-LIKE PROTEIN TIG, CHLOROPLASTIC"/>
    <property type="match status" value="1"/>
</dbReference>
<dbReference type="Pfam" id="PF05698">
    <property type="entry name" value="Trigger_C"/>
    <property type="match status" value="1"/>
</dbReference>
<dbReference type="Pfam" id="PF05697">
    <property type="entry name" value="Trigger_N"/>
    <property type="match status" value="1"/>
</dbReference>
<dbReference type="PIRSF" id="PIRSF003095">
    <property type="entry name" value="Trigger_factor"/>
    <property type="match status" value="1"/>
</dbReference>
<dbReference type="SUPFAM" id="SSF54534">
    <property type="entry name" value="FKBP-like"/>
    <property type="match status" value="1"/>
</dbReference>
<dbReference type="SUPFAM" id="SSF109998">
    <property type="entry name" value="Triger factor/SurA peptide-binding domain-like"/>
    <property type="match status" value="1"/>
</dbReference>
<dbReference type="SUPFAM" id="SSF102735">
    <property type="entry name" value="Trigger factor ribosome-binding domain"/>
    <property type="match status" value="1"/>
</dbReference>
<protein>
    <recommendedName>
        <fullName evidence="1">Trigger factor</fullName>
        <shortName evidence="1">TF</shortName>
        <ecNumber evidence="1">5.2.1.8</ecNumber>
    </recommendedName>
    <alternativeName>
        <fullName evidence="1">PPIase</fullName>
    </alternativeName>
</protein>
<accession>B4SLN0</accession>
<sequence>MQASIESTGNLERRLSFSLPEDRLQSHIVGRLGEIARTTRIKGFRPGKVPAKVIEQRFGAQVRGEALDGLLRETFDAAVREHDLRIVGSPRIDKGEEGEFSFVATVEVVPDFGDIDVSKLTVVRHSAEISDADIDQMIENLQNQRRTWAPVSRGAQDGDLVAVETWSQAGEERLPAEGTEKGSIVLGQGMMFETIEKGLVGLAKGEEKTLDVEFPADWRVPVLAGKTVQVTVKVAEVSEPVVPAVDEAFIKSFGVKGGDVEQFRSDIRANLERELKGALMNRLRREVGEQLIAAYASVEMPPRLVENEARAMLAQQVEQIRRNGQNVGEIPADAHEGFKDAAAKRVLVGLLVGEVARVNDLRLEAKRLNETMRLIASTYEEPEQVIEMYRNDPQLMSGLQNRVMEEQVIDWIAERAQHTEEKLSFQDAIRQ</sequence>
<name>TIG_STRM5</name>